<feature type="chain" id="PRO_1000087203" description="Large ribosomal subunit protein uL23">
    <location>
        <begin position="1"/>
        <end position="101"/>
    </location>
</feature>
<evidence type="ECO:0000255" key="1">
    <source>
        <dbReference type="HAMAP-Rule" id="MF_01369"/>
    </source>
</evidence>
<evidence type="ECO:0000305" key="2"/>
<keyword id="KW-1185">Reference proteome</keyword>
<keyword id="KW-0687">Ribonucleoprotein</keyword>
<keyword id="KW-0689">Ribosomal protein</keyword>
<keyword id="KW-0694">RNA-binding</keyword>
<keyword id="KW-0699">rRNA-binding</keyword>
<proteinExistence type="inferred from homology"/>
<reference key="1">
    <citation type="journal article" date="2013" name="Stand. Genomic Sci.">
        <title>Complete genome sequence of Arthrobacter sp. strain FB24.</title>
        <authorList>
            <person name="Nakatsu C.H."/>
            <person name="Barabote R."/>
            <person name="Thompson S."/>
            <person name="Bruce D."/>
            <person name="Detter C."/>
            <person name="Brettin T."/>
            <person name="Han C."/>
            <person name="Beasley F."/>
            <person name="Chen W."/>
            <person name="Konopka A."/>
            <person name="Xie G."/>
        </authorList>
    </citation>
    <scope>NUCLEOTIDE SEQUENCE [LARGE SCALE GENOMIC DNA]</scope>
    <source>
        <strain>FB24</strain>
    </source>
</reference>
<name>RL23_ARTS2</name>
<gene>
    <name evidence="1" type="primary">rplW</name>
    <name type="ordered locus">Arth_2973</name>
</gene>
<sequence>MSAATIKDPRDVVLAPVVSEKSYGLIDEGKYTFLVDPRSNKTEIKLAVEKIFSVKVESINTINRAGKRKRTKFGWGTRKNTKRAIVTLKEGTIDIFGGPLA</sequence>
<organism>
    <name type="scientific">Arthrobacter sp. (strain FB24)</name>
    <dbReference type="NCBI Taxonomy" id="290399"/>
    <lineage>
        <taxon>Bacteria</taxon>
        <taxon>Bacillati</taxon>
        <taxon>Actinomycetota</taxon>
        <taxon>Actinomycetes</taxon>
        <taxon>Micrococcales</taxon>
        <taxon>Micrococcaceae</taxon>
        <taxon>Arthrobacter</taxon>
    </lineage>
</organism>
<protein>
    <recommendedName>
        <fullName evidence="1">Large ribosomal subunit protein uL23</fullName>
    </recommendedName>
    <alternativeName>
        <fullName evidence="2">50S ribosomal protein L23</fullName>
    </alternativeName>
</protein>
<accession>A0JZ82</accession>
<comment type="function">
    <text evidence="1">One of the early assembly proteins it binds 23S rRNA. One of the proteins that surrounds the polypeptide exit tunnel on the outside of the ribosome. Forms the main docking site for trigger factor binding to the ribosome.</text>
</comment>
<comment type="subunit">
    <text evidence="1">Part of the 50S ribosomal subunit. Contacts protein L29, and trigger factor when it is bound to the ribosome.</text>
</comment>
<comment type="similarity">
    <text evidence="1">Belongs to the universal ribosomal protein uL23 family.</text>
</comment>
<dbReference type="EMBL" id="CP000454">
    <property type="protein sequence ID" value="ABK04352.1"/>
    <property type="molecule type" value="Genomic_DNA"/>
</dbReference>
<dbReference type="RefSeq" id="WP_011692807.1">
    <property type="nucleotide sequence ID" value="NC_008541.1"/>
</dbReference>
<dbReference type="SMR" id="A0JZ82"/>
<dbReference type="STRING" id="290399.Arth_2973"/>
<dbReference type="KEGG" id="art:Arth_2973"/>
<dbReference type="eggNOG" id="COG0089">
    <property type="taxonomic scope" value="Bacteria"/>
</dbReference>
<dbReference type="HOGENOM" id="CLU_037562_3_2_11"/>
<dbReference type="OrthoDB" id="9793353at2"/>
<dbReference type="Proteomes" id="UP000000754">
    <property type="component" value="Chromosome"/>
</dbReference>
<dbReference type="GO" id="GO:1990904">
    <property type="term" value="C:ribonucleoprotein complex"/>
    <property type="evidence" value="ECO:0007669"/>
    <property type="project" value="UniProtKB-KW"/>
</dbReference>
<dbReference type="GO" id="GO:0005840">
    <property type="term" value="C:ribosome"/>
    <property type="evidence" value="ECO:0007669"/>
    <property type="project" value="UniProtKB-KW"/>
</dbReference>
<dbReference type="GO" id="GO:0019843">
    <property type="term" value="F:rRNA binding"/>
    <property type="evidence" value="ECO:0007669"/>
    <property type="project" value="UniProtKB-UniRule"/>
</dbReference>
<dbReference type="GO" id="GO:0003735">
    <property type="term" value="F:structural constituent of ribosome"/>
    <property type="evidence" value="ECO:0007669"/>
    <property type="project" value="InterPro"/>
</dbReference>
<dbReference type="GO" id="GO:0006412">
    <property type="term" value="P:translation"/>
    <property type="evidence" value="ECO:0007669"/>
    <property type="project" value="UniProtKB-UniRule"/>
</dbReference>
<dbReference type="FunFam" id="3.30.70.330:FF:000001">
    <property type="entry name" value="50S ribosomal protein L23"/>
    <property type="match status" value="1"/>
</dbReference>
<dbReference type="Gene3D" id="3.30.70.330">
    <property type="match status" value="1"/>
</dbReference>
<dbReference type="HAMAP" id="MF_01369_B">
    <property type="entry name" value="Ribosomal_uL23_B"/>
    <property type="match status" value="1"/>
</dbReference>
<dbReference type="InterPro" id="IPR012677">
    <property type="entry name" value="Nucleotide-bd_a/b_plait_sf"/>
</dbReference>
<dbReference type="InterPro" id="IPR013025">
    <property type="entry name" value="Ribosomal_uL23-like"/>
</dbReference>
<dbReference type="InterPro" id="IPR012678">
    <property type="entry name" value="Ribosomal_uL23/eL15/eS24_sf"/>
</dbReference>
<dbReference type="NCBIfam" id="NF004363">
    <property type="entry name" value="PRK05738.2-4"/>
    <property type="match status" value="1"/>
</dbReference>
<dbReference type="NCBIfam" id="NF004364">
    <property type="entry name" value="PRK05738.2-5"/>
    <property type="match status" value="1"/>
</dbReference>
<dbReference type="PANTHER" id="PTHR11620">
    <property type="entry name" value="60S RIBOSOMAL PROTEIN L23A"/>
    <property type="match status" value="1"/>
</dbReference>
<dbReference type="Pfam" id="PF00276">
    <property type="entry name" value="Ribosomal_L23"/>
    <property type="match status" value="1"/>
</dbReference>
<dbReference type="SUPFAM" id="SSF54189">
    <property type="entry name" value="Ribosomal proteins S24e, L23 and L15e"/>
    <property type="match status" value="1"/>
</dbReference>